<gene>
    <name evidence="1" type="primary">hutI</name>
    <name type="ordered locus">Sala_1688</name>
</gene>
<comment type="function">
    <text evidence="1">Catalyzes the hydrolytic cleavage of the carbon-nitrogen bond in imidazolone-5-propanoate to yield N-formimidoyl-L-glutamate. It is the third step in the universal histidine degradation pathway.</text>
</comment>
<comment type="catalytic activity">
    <reaction evidence="1">
        <text>4-imidazolone-5-propanoate + H2O = N-formimidoyl-L-glutamate</text>
        <dbReference type="Rhea" id="RHEA:23660"/>
        <dbReference type="ChEBI" id="CHEBI:15377"/>
        <dbReference type="ChEBI" id="CHEBI:58928"/>
        <dbReference type="ChEBI" id="CHEBI:77893"/>
        <dbReference type="EC" id="3.5.2.7"/>
    </reaction>
</comment>
<comment type="cofactor">
    <cofactor evidence="1">
        <name>Zn(2+)</name>
        <dbReference type="ChEBI" id="CHEBI:29105"/>
    </cofactor>
    <cofactor evidence="1">
        <name>Fe(3+)</name>
        <dbReference type="ChEBI" id="CHEBI:29034"/>
    </cofactor>
    <text evidence="1">Binds 1 zinc or iron ion per subunit.</text>
</comment>
<comment type="pathway">
    <text evidence="1">Amino-acid degradation; L-histidine degradation into L-glutamate; N-formimidoyl-L-glutamate from L-histidine: step 3/3.</text>
</comment>
<comment type="subcellular location">
    <subcellularLocation>
        <location evidence="1">Cytoplasm</location>
    </subcellularLocation>
</comment>
<comment type="similarity">
    <text evidence="1">Belongs to the metallo-dependent hydrolases superfamily. HutI family.</text>
</comment>
<dbReference type="EC" id="3.5.2.7" evidence="1"/>
<dbReference type="EMBL" id="CP000356">
    <property type="protein sequence ID" value="ABF53401.1"/>
    <property type="molecule type" value="Genomic_DNA"/>
</dbReference>
<dbReference type="RefSeq" id="WP_011541981.1">
    <property type="nucleotide sequence ID" value="NC_008048.1"/>
</dbReference>
<dbReference type="SMR" id="Q1GSH1"/>
<dbReference type="STRING" id="317655.Sala_1688"/>
<dbReference type="KEGG" id="sal:Sala_1688"/>
<dbReference type="eggNOG" id="COG1228">
    <property type="taxonomic scope" value="Bacteria"/>
</dbReference>
<dbReference type="HOGENOM" id="CLU_041647_0_0_5"/>
<dbReference type="OrthoDB" id="9776455at2"/>
<dbReference type="UniPathway" id="UPA00379">
    <property type="reaction ID" value="UER00551"/>
</dbReference>
<dbReference type="Proteomes" id="UP000006578">
    <property type="component" value="Chromosome"/>
</dbReference>
<dbReference type="GO" id="GO:0005737">
    <property type="term" value="C:cytoplasm"/>
    <property type="evidence" value="ECO:0007669"/>
    <property type="project" value="UniProtKB-SubCell"/>
</dbReference>
<dbReference type="GO" id="GO:0050480">
    <property type="term" value="F:imidazolonepropionase activity"/>
    <property type="evidence" value="ECO:0007669"/>
    <property type="project" value="UniProtKB-UniRule"/>
</dbReference>
<dbReference type="GO" id="GO:0005506">
    <property type="term" value="F:iron ion binding"/>
    <property type="evidence" value="ECO:0007669"/>
    <property type="project" value="UniProtKB-UniRule"/>
</dbReference>
<dbReference type="GO" id="GO:0008270">
    <property type="term" value="F:zinc ion binding"/>
    <property type="evidence" value="ECO:0007669"/>
    <property type="project" value="UniProtKB-UniRule"/>
</dbReference>
<dbReference type="GO" id="GO:0019556">
    <property type="term" value="P:L-histidine catabolic process to glutamate and formamide"/>
    <property type="evidence" value="ECO:0007669"/>
    <property type="project" value="UniProtKB-UniPathway"/>
</dbReference>
<dbReference type="GO" id="GO:0019557">
    <property type="term" value="P:L-histidine catabolic process to glutamate and formate"/>
    <property type="evidence" value="ECO:0007669"/>
    <property type="project" value="UniProtKB-UniPathway"/>
</dbReference>
<dbReference type="CDD" id="cd01296">
    <property type="entry name" value="Imidazolone-5PH"/>
    <property type="match status" value="1"/>
</dbReference>
<dbReference type="FunFam" id="3.20.20.140:FF:000007">
    <property type="entry name" value="Imidazolonepropionase"/>
    <property type="match status" value="1"/>
</dbReference>
<dbReference type="Gene3D" id="3.20.20.140">
    <property type="entry name" value="Metal-dependent hydrolases"/>
    <property type="match status" value="1"/>
</dbReference>
<dbReference type="Gene3D" id="2.30.40.10">
    <property type="entry name" value="Urease, subunit C, domain 1"/>
    <property type="match status" value="1"/>
</dbReference>
<dbReference type="HAMAP" id="MF_00372">
    <property type="entry name" value="HutI"/>
    <property type="match status" value="1"/>
</dbReference>
<dbReference type="InterPro" id="IPR006680">
    <property type="entry name" value="Amidohydro-rel"/>
</dbReference>
<dbReference type="InterPro" id="IPR005920">
    <property type="entry name" value="HutI"/>
</dbReference>
<dbReference type="InterPro" id="IPR011059">
    <property type="entry name" value="Metal-dep_hydrolase_composite"/>
</dbReference>
<dbReference type="InterPro" id="IPR032466">
    <property type="entry name" value="Metal_Hydrolase"/>
</dbReference>
<dbReference type="NCBIfam" id="TIGR01224">
    <property type="entry name" value="hutI"/>
    <property type="match status" value="1"/>
</dbReference>
<dbReference type="PANTHER" id="PTHR42752">
    <property type="entry name" value="IMIDAZOLONEPROPIONASE"/>
    <property type="match status" value="1"/>
</dbReference>
<dbReference type="PANTHER" id="PTHR42752:SF1">
    <property type="entry name" value="IMIDAZOLONEPROPIONASE-RELATED"/>
    <property type="match status" value="1"/>
</dbReference>
<dbReference type="Pfam" id="PF01979">
    <property type="entry name" value="Amidohydro_1"/>
    <property type="match status" value="1"/>
</dbReference>
<dbReference type="SUPFAM" id="SSF51338">
    <property type="entry name" value="Composite domain of metallo-dependent hydrolases"/>
    <property type="match status" value="1"/>
</dbReference>
<dbReference type="SUPFAM" id="SSF51556">
    <property type="entry name" value="Metallo-dependent hydrolases"/>
    <property type="match status" value="1"/>
</dbReference>
<proteinExistence type="inferred from homology"/>
<protein>
    <recommendedName>
        <fullName evidence="1">Imidazolonepropionase</fullName>
        <ecNumber evidence="1">3.5.2.7</ecNumber>
    </recommendedName>
    <alternativeName>
        <fullName evidence="1">Imidazolone-5-propionate hydrolase</fullName>
    </alternativeName>
</protein>
<keyword id="KW-0963">Cytoplasm</keyword>
<keyword id="KW-0369">Histidine metabolism</keyword>
<keyword id="KW-0378">Hydrolase</keyword>
<keyword id="KW-0408">Iron</keyword>
<keyword id="KW-0479">Metal-binding</keyword>
<keyword id="KW-1185">Reference proteome</keyword>
<keyword id="KW-0862">Zinc</keyword>
<reference key="1">
    <citation type="journal article" date="2009" name="Proc. Natl. Acad. Sci. U.S.A.">
        <title>The genomic basis of trophic strategy in marine bacteria.</title>
        <authorList>
            <person name="Lauro F.M."/>
            <person name="McDougald D."/>
            <person name="Thomas T."/>
            <person name="Williams T.J."/>
            <person name="Egan S."/>
            <person name="Rice S."/>
            <person name="DeMaere M.Z."/>
            <person name="Ting L."/>
            <person name="Ertan H."/>
            <person name="Johnson J."/>
            <person name="Ferriera S."/>
            <person name="Lapidus A."/>
            <person name="Anderson I."/>
            <person name="Kyrpides N."/>
            <person name="Munk A.C."/>
            <person name="Detter C."/>
            <person name="Han C.S."/>
            <person name="Brown M.V."/>
            <person name="Robb F.T."/>
            <person name="Kjelleberg S."/>
            <person name="Cavicchioli R."/>
        </authorList>
    </citation>
    <scope>NUCLEOTIDE SEQUENCE [LARGE SCALE GENOMIC DNA]</scope>
    <source>
        <strain>DSM 13593 / LMG 18877 / RB2256</strain>
    </source>
</reference>
<sequence>MTHRRDTVQMEQRWTNARLATMAGDDLGLIDDGVVAAKDGRIIYAGPAKDAPATQGAVHDCEGRLITPGLIDCHTHLIHGGNRANEWAMRLEGASYDEIARAGGGIVSTMRATRDASEAELVASALPRLDALIAEGVTTIEIKSGYGLSTNDELKMLRAARALANIRAIRVEPTFLGAHALPPEYQGDSDAYIDLVVGEMIPAVASLATAVDAFCEGIGFSPEQCARVLAAAKAHGLKVKLHAEQLSALHGSALAARHGALSADHLEHATDEDVRAMAEAGSVAVLLPGAYYFMRETRLPPVQAMRRHGTRIALATDNNPGTSPTSSLLLMLNMGATLFGLTVIEALRGVTVNAAAALGLSAEIGTIEVGKACDLAIWDVGDPAELVYRIGFNPLHQRIKDGQ</sequence>
<name>HUTI_SPHAL</name>
<feature type="chain" id="PRO_0000306518" description="Imidazolonepropionase">
    <location>
        <begin position="1"/>
        <end position="403"/>
    </location>
</feature>
<feature type="binding site" evidence="1">
    <location>
        <position position="74"/>
    </location>
    <ligand>
        <name>Fe(3+)</name>
        <dbReference type="ChEBI" id="CHEBI:29034"/>
    </ligand>
</feature>
<feature type="binding site" evidence="1">
    <location>
        <position position="74"/>
    </location>
    <ligand>
        <name>Zn(2+)</name>
        <dbReference type="ChEBI" id="CHEBI:29105"/>
    </ligand>
</feature>
<feature type="binding site" evidence="1">
    <location>
        <position position="76"/>
    </location>
    <ligand>
        <name>Fe(3+)</name>
        <dbReference type="ChEBI" id="CHEBI:29034"/>
    </ligand>
</feature>
<feature type="binding site" evidence="1">
    <location>
        <position position="76"/>
    </location>
    <ligand>
        <name>Zn(2+)</name>
        <dbReference type="ChEBI" id="CHEBI:29105"/>
    </ligand>
</feature>
<feature type="binding site" evidence="1">
    <location>
        <position position="83"/>
    </location>
    <ligand>
        <name>4-imidazolone-5-propanoate</name>
        <dbReference type="ChEBI" id="CHEBI:77893"/>
    </ligand>
</feature>
<feature type="binding site" evidence="1">
    <location>
        <position position="146"/>
    </location>
    <ligand>
        <name>4-imidazolone-5-propanoate</name>
        <dbReference type="ChEBI" id="CHEBI:77893"/>
    </ligand>
</feature>
<feature type="binding site" evidence="1">
    <location>
        <position position="146"/>
    </location>
    <ligand>
        <name>N-formimidoyl-L-glutamate</name>
        <dbReference type="ChEBI" id="CHEBI:58928"/>
    </ligand>
</feature>
<feature type="binding site" evidence="1">
    <location>
        <position position="179"/>
    </location>
    <ligand>
        <name>4-imidazolone-5-propanoate</name>
        <dbReference type="ChEBI" id="CHEBI:77893"/>
    </ligand>
</feature>
<feature type="binding site" evidence="1">
    <location>
        <position position="242"/>
    </location>
    <ligand>
        <name>Fe(3+)</name>
        <dbReference type="ChEBI" id="CHEBI:29034"/>
    </ligand>
</feature>
<feature type="binding site" evidence="1">
    <location>
        <position position="242"/>
    </location>
    <ligand>
        <name>Zn(2+)</name>
        <dbReference type="ChEBI" id="CHEBI:29105"/>
    </ligand>
</feature>
<feature type="binding site" evidence="1">
    <location>
        <position position="245"/>
    </location>
    <ligand>
        <name>4-imidazolone-5-propanoate</name>
        <dbReference type="ChEBI" id="CHEBI:77893"/>
    </ligand>
</feature>
<feature type="binding site" evidence="1">
    <location>
        <position position="317"/>
    </location>
    <ligand>
        <name>Fe(3+)</name>
        <dbReference type="ChEBI" id="CHEBI:29034"/>
    </ligand>
</feature>
<feature type="binding site" evidence="1">
    <location>
        <position position="317"/>
    </location>
    <ligand>
        <name>Zn(2+)</name>
        <dbReference type="ChEBI" id="CHEBI:29105"/>
    </ligand>
</feature>
<feature type="binding site" evidence="1">
    <location>
        <position position="319"/>
    </location>
    <ligand>
        <name>N-formimidoyl-L-glutamate</name>
        <dbReference type="ChEBI" id="CHEBI:58928"/>
    </ligand>
</feature>
<feature type="binding site" evidence="1">
    <location>
        <position position="321"/>
    </location>
    <ligand>
        <name>N-formimidoyl-L-glutamate</name>
        <dbReference type="ChEBI" id="CHEBI:58928"/>
    </ligand>
</feature>
<feature type="binding site" evidence="1">
    <location>
        <position position="322"/>
    </location>
    <ligand>
        <name>4-imidazolone-5-propanoate</name>
        <dbReference type="ChEBI" id="CHEBI:77893"/>
    </ligand>
</feature>
<accession>Q1GSH1</accession>
<evidence type="ECO:0000255" key="1">
    <source>
        <dbReference type="HAMAP-Rule" id="MF_00372"/>
    </source>
</evidence>
<organism>
    <name type="scientific">Sphingopyxis alaskensis (strain DSM 13593 / LMG 18877 / RB2256)</name>
    <name type="common">Sphingomonas alaskensis</name>
    <dbReference type="NCBI Taxonomy" id="317655"/>
    <lineage>
        <taxon>Bacteria</taxon>
        <taxon>Pseudomonadati</taxon>
        <taxon>Pseudomonadota</taxon>
        <taxon>Alphaproteobacteria</taxon>
        <taxon>Sphingomonadales</taxon>
        <taxon>Sphingomonadaceae</taxon>
        <taxon>Sphingopyxis</taxon>
    </lineage>
</organism>